<name>SNF11_YEAST</name>
<gene>
    <name type="primary">SNF11</name>
    <name type="ordered locus">YDR073W</name>
    <name type="ORF">D4411</name>
</gene>
<organism>
    <name type="scientific">Saccharomyces cerevisiae (strain ATCC 204508 / S288c)</name>
    <name type="common">Baker's yeast</name>
    <dbReference type="NCBI Taxonomy" id="559292"/>
    <lineage>
        <taxon>Eukaryota</taxon>
        <taxon>Fungi</taxon>
        <taxon>Dikarya</taxon>
        <taxon>Ascomycota</taxon>
        <taxon>Saccharomycotina</taxon>
        <taxon>Saccharomycetes</taxon>
        <taxon>Saccharomycetales</taxon>
        <taxon>Saccharomycetaceae</taxon>
        <taxon>Saccharomyces</taxon>
    </lineage>
</organism>
<dbReference type="EMBL" id="Z46796">
    <property type="protein sequence ID" value="CAA86795.1"/>
    <property type="molecule type" value="Genomic_DNA"/>
</dbReference>
<dbReference type="EMBL" id="Z74369">
    <property type="protein sequence ID" value="CAA98891.1"/>
    <property type="molecule type" value="Genomic_DNA"/>
</dbReference>
<dbReference type="EMBL" id="X82086">
    <property type="protein sequence ID" value="CAA57601.1"/>
    <property type="molecule type" value="Genomic_DNA"/>
</dbReference>
<dbReference type="EMBL" id="X82086">
    <property type="protein sequence ID" value="CAA57600.1"/>
    <property type="molecule type" value="Genomic_DNA"/>
</dbReference>
<dbReference type="EMBL" id="AY557668">
    <property type="protein sequence ID" value="AAS55994.1"/>
    <property type="molecule type" value="Genomic_DNA"/>
</dbReference>
<dbReference type="EMBL" id="BK006938">
    <property type="protein sequence ID" value="DAA11919.1"/>
    <property type="molecule type" value="Genomic_DNA"/>
</dbReference>
<dbReference type="PIR" id="S48760">
    <property type="entry name" value="S48760"/>
</dbReference>
<dbReference type="RefSeq" id="NP_010358.3">
    <property type="nucleotide sequence ID" value="NM_001180381.3"/>
</dbReference>
<dbReference type="PDB" id="7VRC">
    <property type="method" value="X-ray"/>
    <property type="resolution" value="2.15 A"/>
    <property type="chains" value="A/C=1-169"/>
</dbReference>
<dbReference type="PDBsum" id="7VRC"/>
<dbReference type="SMR" id="P38956"/>
<dbReference type="BioGRID" id="32128">
    <property type="interactions" value="160"/>
</dbReference>
<dbReference type="ComplexPortal" id="CPX-1150">
    <property type="entry name" value="SWI/SNF chromatin remodelling complex"/>
</dbReference>
<dbReference type="DIP" id="DIP-1530N"/>
<dbReference type="FunCoup" id="P38956">
    <property type="interactions" value="141"/>
</dbReference>
<dbReference type="IntAct" id="P38956">
    <property type="interactions" value="19"/>
</dbReference>
<dbReference type="MINT" id="P38956"/>
<dbReference type="STRING" id="4932.YDR073W"/>
<dbReference type="iPTMnet" id="P38956"/>
<dbReference type="PaxDb" id="4932-YDR073W"/>
<dbReference type="PeptideAtlas" id="P38956"/>
<dbReference type="EnsemblFungi" id="YDR073W_mRNA">
    <property type="protein sequence ID" value="YDR073W"/>
    <property type="gene ID" value="YDR073W"/>
</dbReference>
<dbReference type="GeneID" id="851645"/>
<dbReference type="KEGG" id="sce:YDR073W"/>
<dbReference type="AGR" id="SGD:S000002480"/>
<dbReference type="SGD" id="S000002480">
    <property type="gene designation" value="SNF11"/>
</dbReference>
<dbReference type="VEuPathDB" id="FungiDB:YDR073W"/>
<dbReference type="eggNOG" id="ENOG502S5CB">
    <property type="taxonomic scope" value="Eukaryota"/>
</dbReference>
<dbReference type="HOGENOM" id="CLU_116829_0_0_1"/>
<dbReference type="InParanoid" id="P38956"/>
<dbReference type="OMA" id="NDANQDT"/>
<dbReference type="BioCyc" id="YEAST:G3O-29679-MONOMER"/>
<dbReference type="BioGRID-ORCS" id="851645">
    <property type="hits" value="0 hits in 10 CRISPR screens"/>
</dbReference>
<dbReference type="PRO" id="PR:P38956"/>
<dbReference type="Proteomes" id="UP000002311">
    <property type="component" value="Chromosome IV"/>
</dbReference>
<dbReference type="RNAct" id="P38956">
    <property type="molecule type" value="protein"/>
</dbReference>
<dbReference type="GO" id="GO:0000785">
    <property type="term" value="C:chromatin"/>
    <property type="evidence" value="ECO:0000303"/>
    <property type="project" value="ComplexPortal"/>
</dbReference>
<dbReference type="GO" id="GO:0005829">
    <property type="term" value="C:cytosol"/>
    <property type="evidence" value="ECO:0000314"/>
    <property type="project" value="SGD"/>
</dbReference>
<dbReference type="GO" id="GO:0005634">
    <property type="term" value="C:nucleus"/>
    <property type="evidence" value="ECO:0000314"/>
    <property type="project" value="SGD"/>
</dbReference>
<dbReference type="GO" id="GO:0016514">
    <property type="term" value="C:SWI/SNF complex"/>
    <property type="evidence" value="ECO:0000314"/>
    <property type="project" value="SGD"/>
</dbReference>
<dbReference type="GO" id="GO:0006338">
    <property type="term" value="P:chromatin remodeling"/>
    <property type="evidence" value="ECO:0000314"/>
    <property type="project" value="ComplexPortal"/>
</dbReference>
<dbReference type="GO" id="GO:0045944">
    <property type="term" value="P:positive regulation of transcription by RNA polymerase II"/>
    <property type="evidence" value="ECO:0000315"/>
    <property type="project" value="SGD"/>
</dbReference>
<dbReference type="GO" id="GO:0006357">
    <property type="term" value="P:regulation of transcription by RNA polymerase II"/>
    <property type="evidence" value="ECO:0000314"/>
    <property type="project" value="ComplexPortal"/>
</dbReference>
<comment type="function">
    <text>Involved in transcriptional activation. Component of the SWI/SNF complex, an ATP-dependent chromatin remodeling complex, which is required for the positive and negative regulation of gene expression of a large number of genes. It changes chromatin structure by altering DNA-histone contacts within a nucleosome, leading eventually to a change in nucleosome position, thus facilitating or repressing binding of gene-specific transcription factors.</text>
</comment>
<comment type="subunit">
    <text>Component of the SWI/SNF global transcription activator complex. The 1.14 MDa SWI/SNF complex is composed of 11 different subunits: one copy each of SWI1, SNF2/SWI2, SNF5, SNF12/SWP73, ARP7/SWP61, ARP9/SWP59; two copies each of SWI3, SNF6, SNF11, SWP82; and three copies of TAF14/SWP29.</text>
</comment>
<comment type="interaction">
    <interactant intactId="EBI-17560">
        <id>P38956</id>
    </interactant>
    <interactant intactId="EBI-17526">
        <id>P22082</id>
        <label>SNF2</label>
    </interactant>
    <organismsDiffer>false</organismsDiffer>
    <experiments>3</experiments>
</comment>
<comment type="interaction">
    <interactant intactId="EBI-17560">
        <id>P38956</id>
    </interactant>
    <interactant intactId="EBI-17550">
        <id>P18888</id>
        <label>SNF6</label>
    </interactant>
    <organismsDiffer>false</organismsDiffer>
    <experiments>5</experiments>
</comment>
<comment type="subcellular location">
    <subcellularLocation>
        <location evidence="3">Nucleus</location>
    </subcellularLocation>
</comment>
<comment type="miscellaneous">
    <text evidence="2">Present with 1030 molecules/cell in log phase SD medium.</text>
</comment>
<proteinExistence type="evidence at protein level"/>
<feature type="initiator methionine" description="Removed" evidence="4">
    <location>
        <position position="1"/>
    </location>
</feature>
<feature type="chain" id="PRO_0000072004" description="Transcription regulatory protein SNF11">
    <location>
        <begin position="2"/>
        <end position="169"/>
    </location>
</feature>
<feature type="repeat" description="1-1">
    <location>
        <begin position="28"/>
        <end position="31"/>
    </location>
</feature>
<feature type="repeat" description="1-2">
    <location>
        <begin position="32"/>
        <end position="35"/>
    </location>
</feature>
<feature type="repeat" description="1-3">
    <location>
        <begin position="36"/>
        <end position="39"/>
    </location>
</feature>
<feature type="repeat" description="1-4">
    <location>
        <begin position="40"/>
        <end position="43"/>
    </location>
</feature>
<feature type="repeat" description="1-5">
    <location>
        <begin position="44"/>
        <end position="47"/>
    </location>
</feature>
<feature type="repeat" description="1-6">
    <location>
        <begin position="48"/>
        <end position="51"/>
    </location>
</feature>
<feature type="repeat" description="2-1">
    <location>
        <begin position="76"/>
        <end position="80"/>
    </location>
</feature>
<feature type="repeat" description="2-2">
    <location>
        <begin position="160"/>
        <end position="165"/>
    </location>
</feature>
<feature type="region of interest" description="Disordered" evidence="1">
    <location>
        <begin position="1"/>
        <end position="24"/>
    </location>
</feature>
<feature type="region of interest" description="6 X 4 AA tandem repeats of N-[AT]-[NT]-A">
    <location>
        <begin position="28"/>
        <end position="51"/>
    </location>
</feature>
<feature type="region of interest" description="2 X 5 AA repeats of L-L-A-R-V">
    <location>
        <begin position="76"/>
        <end position="165"/>
    </location>
</feature>
<feature type="compositionally biased region" description="Low complexity" evidence="1">
    <location>
        <begin position="9"/>
        <end position="21"/>
    </location>
</feature>
<feature type="modified residue" description="N-acetylserine" evidence="4">
    <location>
        <position position="2"/>
    </location>
</feature>
<feature type="helix" evidence="5">
    <location>
        <begin position="58"/>
        <end position="93"/>
    </location>
</feature>
<feature type="helix" evidence="5">
    <location>
        <begin position="97"/>
        <end position="99"/>
    </location>
</feature>
<feature type="helix" evidence="5">
    <location>
        <begin position="101"/>
        <end position="128"/>
    </location>
</feature>
<feature type="helix" evidence="5">
    <location>
        <begin position="154"/>
        <end position="168"/>
    </location>
</feature>
<protein>
    <recommendedName>
        <fullName>Transcription regulatory protein SNF11</fullName>
    </recommendedName>
    <alternativeName>
        <fullName>SWI/SNF complex component SNF11</fullName>
    </alternativeName>
</protein>
<reference key="1">
    <citation type="journal article" date="1997" name="Nature">
        <title>The nucleotide sequence of Saccharomyces cerevisiae chromosome IV.</title>
        <authorList>
            <person name="Jacq C."/>
            <person name="Alt-Moerbe J."/>
            <person name="Andre B."/>
            <person name="Arnold W."/>
            <person name="Bahr A."/>
            <person name="Ballesta J.P.G."/>
            <person name="Bargues M."/>
            <person name="Baron L."/>
            <person name="Becker A."/>
            <person name="Biteau N."/>
            <person name="Bloecker H."/>
            <person name="Blugeon C."/>
            <person name="Boskovic J."/>
            <person name="Brandt P."/>
            <person name="Brueckner M."/>
            <person name="Buitrago M.J."/>
            <person name="Coster F."/>
            <person name="Delaveau T."/>
            <person name="del Rey F."/>
            <person name="Dujon B."/>
            <person name="Eide L.G."/>
            <person name="Garcia-Cantalejo J.M."/>
            <person name="Goffeau A."/>
            <person name="Gomez-Peris A."/>
            <person name="Granotier C."/>
            <person name="Hanemann V."/>
            <person name="Hankeln T."/>
            <person name="Hoheisel J.D."/>
            <person name="Jaeger W."/>
            <person name="Jimenez A."/>
            <person name="Jonniaux J.-L."/>
            <person name="Kraemer C."/>
            <person name="Kuester H."/>
            <person name="Laamanen P."/>
            <person name="Legros Y."/>
            <person name="Louis E.J."/>
            <person name="Moeller-Rieker S."/>
            <person name="Monnet A."/>
            <person name="Moro M."/>
            <person name="Mueller-Auer S."/>
            <person name="Nussbaumer B."/>
            <person name="Paricio N."/>
            <person name="Paulin L."/>
            <person name="Perea J."/>
            <person name="Perez-Alonso M."/>
            <person name="Perez-Ortin J.E."/>
            <person name="Pohl T.M."/>
            <person name="Prydz H."/>
            <person name="Purnelle B."/>
            <person name="Rasmussen S.W."/>
            <person name="Remacha M.A."/>
            <person name="Revuelta J.L."/>
            <person name="Rieger M."/>
            <person name="Salom D."/>
            <person name="Saluz H.P."/>
            <person name="Saiz J.E."/>
            <person name="Saren A.-M."/>
            <person name="Schaefer M."/>
            <person name="Scharfe M."/>
            <person name="Schmidt E.R."/>
            <person name="Schneider C."/>
            <person name="Scholler P."/>
            <person name="Schwarz S."/>
            <person name="Soler-Mira A."/>
            <person name="Urrestarazu L.A."/>
            <person name="Verhasselt P."/>
            <person name="Vissers S."/>
            <person name="Voet M."/>
            <person name="Volckaert G."/>
            <person name="Wagner G."/>
            <person name="Wambutt R."/>
            <person name="Wedler E."/>
            <person name="Wedler H."/>
            <person name="Woelfl S."/>
            <person name="Harris D.E."/>
            <person name="Bowman S."/>
            <person name="Brown D."/>
            <person name="Churcher C.M."/>
            <person name="Connor R."/>
            <person name="Dedman K."/>
            <person name="Gentles S."/>
            <person name="Hamlin N."/>
            <person name="Hunt S."/>
            <person name="Jones L."/>
            <person name="McDonald S."/>
            <person name="Murphy L.D."/>
            <person name="Niblett D."/>
            <person name="Odell C."/>
            <person name="Oliver K."/>
            <person name="Rajandream M.A."/>
            <person name="Richards C."/>
            <person name="Shore L."/>
            <person name="Walsh S.V."/>
            <person name="Barrell B.G."/>
            <person name="Dietrich F.S."/>
            <person name="Mulligan J.T."/>
            <person name="Allen E."/>
            <person name="Araujo R."/>
            <person name="Aviles E."/>
            <person name="Berno A."/>
            <person name="Carpenter J."/>
            <person name="Chen E."/>
            <person name="Cherry J.M."/>
            <person name="Chung E."/>
            <person name="Duncan M."/>
            <person name="Hunicke-Smith S."/>
            <person name="Hyman R.W."/>
            <person name="Komp C."/>
            <person name="Lashkari D."/>
            <person name="Lew H."/>
            <person name="Lin D."/>
            <person name="Mosedale D."/>
            <person name="Nakahara K."/>
            <person name="Namath A."/>
            <person name="Oefner P."/>
            <person name="Oh C."/>
            <person name="Petel F.X."/>
            <person name="Roberts D."/>
            <person name="Schramm S."/>
            <person name="Schroeder M."/>
            <person name="Shogren T."/>
            <person name="Shroff N."/>
            <person name="Winant A."/>
            <person name="Yelton M.A."/>
            <person name="Botstein D."/>
            <person name="Davis R.W."/>
            <person name="Johnston M."/>
            <person name="Andrews S."/>
            <person name="Brinkman R."/>
            <person name="Cooper J."/>
            <person name="Ding H."/>
            <person name="Du Z."/>
            <person name="Favello A."/>
            <person name="Fulton L."/>
            <person name="Gattung S."/>
            <person name="Greco T."/>
            <person name="Hallsworth K."/>
            <person name="Hawkins J."/>
            <person name="Hillier L.W."/>
            <person name="Jier M."/>
            <person name="Johnson D."/>
            <person name="Johnston L."/>
            <person name="Kirsten J."/>
            <person name="Kucaba T."/>
            <person name="Langston Y."/>
            <person name="Latreille P."/>
            <person name="Le T."/>
            <person name="Mardis E."/>
            <person name="Menezes S."/>
            <person name="Miller N."/>
            <person name="Nhan M."/>
            <person name="Pauley A."/>
            <person name="Peluso D."/>
            <person name="Rifkin L."/>
            <person name="Riles L."/>
            <person name="Taich A."/>
            <person name="Trevaskis E."/>
            <person name="Vignati D."/>
            <person name="Wilcox L."/>
            <person name="Wohldman P."/>
            <person name="Vaudin M."/>
            <person name="Wilson R."/>
            <person name="Waterston R."/>
            <person name="Albermann K."/>
            <person name="Hani J."/>
            <person name="Heumann K."/>
            <person name="Kleine K."/>
            <person name="Mewes H.-W."/>
            <person name="Zollner A."/>
            <person name="Zaccaria P."/>
        </authorList>
    </citation>
    <scope>NUCLEOTIDE SEQUENCE [LARGE SCALE GENOMIC DNA]</scope>
    <source>
        <strain>ATCC 204508 / S288c</strain>
    </source>
</reference>
<reference key="2">
    <citation type="journal article" date="2014" name="G3 (Bethesda)">
        <title>The reference genome sequence of Saccharomyces cerevisiae: Then and now.</title>
        <authorList>
            <person name="Engel S.R."/>
            <person name="Dietrich F.S."/>
            <person name="Fisk D.G."/>
            <person name="Binkley G."/>
            <person name="Balakrishnan R."/>
            <person name="Costanzo M.C."/>
            <person name="Dwight S.S."/>
            <person name="Hitz B.C."/>
            <person name="Karra K."/>
            <person name="Nash R.S."/>
            <person name="Weng S."/>
            <person name="Wong E.D."/>
            <person name="Lloyd P."/>
            <person name="Skrzypek M.S."/>
            <person name="Miyasato S.R."/>
            <person name="Simison M."/>
            <person name="Cherry J.M."/>
        </authorList>
    </citation>
    <scope>GENOME REANNOTATION</scope>
    <source>
        <strain>ATCC 204508 / S288c</strain>
    </source>
</reference>
<reference key="3">
    <citation type="journal article" date="2007" name="Genome Res.">
        <title>Approaching a complete repository of sequence-verified protein-encoding clones for Saccharomyces cerevisiae.</title>
        <authorList>
            <person name="Hu Y."/>
            <person name="Rolfs A."/>
            <person name="Bhullar B."/>
            <person name="Murthy T.V.S."/>
            <person name="Zhu C."/>
            <person name="Berger M.F."/>
            <person name="Camargo A.A."/>
            <person name="Kelley F."/>
            <person name="McCarron S."/>
            <person name="Jepson D."/>
            <person name="Richardson A."/>
            <person name="Raphael J."/>
            <person name="Moreira D."/>
            <person name="Taycher E."/>
            <person name="Zuo D."/>
            <person name="Mohr S."/>
            <person name="Kane M.F."/>
            <person name="Williamson J."/>
            <person name="Simpson A.J.G."/>
            <person name="Bulyk M.L."/>
            <person name="Harlow E."/>
            <person name="Marsischky G."/>
            <person name="Kolodner R.D."/>
            <person name="LaBaer J."/>
        </authorList>
    </citation>
    <scope>NUCLEOTIDE SEQUENCE [GENOMIC DNA]</scope>
    <source>
        <strain>ATCC 204508 / S288c</strain>
    </source>
</reference>
<reference key="4">
    <citation type="journal article" date="1995" name="Mol. Cell. Biol.">
        <title>SNF11, a new component of the yeast SNF-SWI complex that interacts with a conserved region of SNF2.</title>
        <authorList>
            <person name="Treich I."/>
            <person name="Cairns B.R."/>
            <person name="de Los Santos T."/>
            <person name="Brewster E."/>
            <person name="Carlson M."/>
        </authorList>
    </citation>
    <scope>CHARACTERIZATION</scope>
</reference>
<reference key="5">
    <citation type="journal article" date="2003" name="Nature">
        <title>Global analysis of protein expression in yeast.</title>
        <authorList>
            <person name="Ghaemmaghami S."/>
            <person name="Huh W.-K."/>
            <person name="Bower K."/>
            <person name="Howson R.W."/>
            <person name="Belle A."/>
            <person name="Dephoure N."/>
            <person name="O'Shea E.K."/>
            <person name="Weissman J.S."/>
        </authorList>
    </citation>
    <scope>LEVEL OF PROTEIN EXPRESSION [LARGE SCALE ANALYSIS]</scope>
</reference>
<reference key="6">
    <citation type="journal article" date="2012" name="Proc. Natl. Acad. Sci. U.S.A.">
        <title>N-terminal acetylome analyses and functional insights of the N-terminal acetyltransferase NatB.</title>
        <authorList>
            <person name="Van Damme P."/>
            <person name="Lasa M."/>
            <person name="Polevoda B."/>
            <person name="Gazquez C."/>
            <person name="Elosegui-Artola A."/>
            <person name="Kim D.S."/>
            <person name="De Juan-Pardo E."/>
            <person name="Demeyer K."/>
            <person name="Hole K."/>
            <person name="Larrea E."/>
            <person name="Timmerman E."/>
            <person name="Prieto J."/>
            <person name="Arnesen T."/>
            <person name="Sherman F."/>
            <person name="Gevaert K."/>
            <person name="Aldabe R."/>
        </authorList>
    </citation>
    <scope>ACETYLATION [LARGE SCALE ANALYSIS] AT SER-2</scope>
    <scope>CLEAVAGE OF INITIATOR METHIONINE [LARGE SCALE ANALYSIS]</scope>
    <scope>IDENTIFICATION BY MASS SPECTROMETRY [LARGE SCALE ANALYSIS]</scope>
</reference>
<reference key="7">
    <citation type="journal article" date="2003" name="Nat. Struct. Biol.">
        <title>Structural analysis of the yeast SWI/SNF chromatin remodeling complex.</title>
        <authorList>
            <person name="Smith C.L."/>
            <person name="Horowitz-Scherer R."/>
            <person name="Flanagan J.F."/>
            <person name="Woodcock C.L."/>
            <person name="Peterson C.L."/>
        </authorList>
    </citation>
    <scope>3D-STRUCTURE MODELING OF THE SWI/SNF COMPLEX</scope>
    <scope>ELECTRON MICROSCOPY OF THE SWI/SNF COMPLEX</scope>
</reference>
<sequence>MSSEIAYSNTNTNTENENRNTGAGVDVNTNANANANATANATANATANATAELNLPTVDEQRQYKVQLLLHINSILLARVIQMNNSLQNNLQNNINNSNNNNIIRIQQLISQFLKRVHANLQCISQINQGVPSAKPLILTPPQLANQQQPPQDILSKLYLLLARVFEIW</sequence>
<evidence type="ECO:0000256" key="1">
    <source>
        <dbReference type="SAM" id="MobiDB-lite"/>
    </source>
</evidence>
<evidence type="ECO:0000269" key="2">
    <source>
    </source>
</evidence>
<evidence type="ECO:0000305" key="3"/>
<evidence type="ECO:0007744" key="4">
    <source>
    </source>
</evidence>
<evidence type="ECO:0007829" key="5">
    <source>
        <dbReference type="PDB" id="7VRC"/>
    </source>
</evidence>
<keyword id="KW-0002">3D-structure</keyword>
<keyword id="KW-0007">Acetylation</keyword>
<keyword id="KW-0010">Activator</keyword>
<keyword id="KW-0539">Nucleus</keyword>
<keyword id="KW-1185">Reference proteome</keyword>
<keyword id="KW-0677">Repeat</keyword>
<keyword id="KW-0804">Transcription</keyword>
<keyword id="KW-0805">Transcription regulation</keyword>
<accession>P38956</accession>
<accession>D6VS59</accession>